<proteinExistence type="inferred from homology"/>
<accession>A6TWW9</accession>
<name>AMPA_ALKMQ</name>
<gene>
    <name evidence="1" type="primary">pepA</name>
    <name type="ordered locus">Amet_4616</name>
</gene>
<reference key="1">
    <citation type="journal article" date="2016" name="Genome Announc.">
        <title>Complete genome sequence of Alkaliphilus metalliredigens strain QYMF, an alkaliphilic and metal-reducing bacterium isolated from borax-contaminated leachate ponds.</title>
        <authorList>
            <person name="Hwang C."/>
            <person name="Copeland A."/>
            <person name="Lucas S."/>
            <person name="Lapidus A."/>
            <person name="Barry K."/>
            <person name="Detter J.C."/>
            <person name="Glavina Del Rio T."/>
            <person name="Hammon N."/>
            <person name="Israni S."/>
            <person name="Dalin E."/>
            <person name="Tice H."/>
            <person name="Pitluck S."/>
            <person name="Chertkov O."/>
            <person name="Brettin T."/>
            <person name="Bruce D."/>
            <person name="Han C."/>
            <person name="Schmutz J."/>
            <person name="Larimer F."/>
            <person name="Land M.L."/>
            <person name="Hauser L."/>
            <person name="Kyrpides N."/>
            <person name="Mikhailova N."/>
            <person name="Ye Q."/>
            <person name="Zhou J."/>
            <person name="Richardson P."/>
            <person name="Fields M.W."/>
        </authorList>
    </citation>
    <scope>NUCLEOTIDE SEQUENCE [LARGE SCALE GENOMIC DNA]</scope>
    <source>
        <strain>QYMF</strain>
    </source>
</reference>
<keyword id="KW-0031">Aminopeptidase</keyword>
<keyword id="KW-0963">Cytoplasm</keyword>
<keyword id="KW-0378">Hydrolase</keyword>
<keyword id="KW-0464">Manganese</keyword>
<keyword id="KW-0479">Metal-binding</keyword>
<keyword id="KW-0645">Protease</keyword>
<keyword id="KW-1185">Reference proteome</keyword>
<comment type="function">
    <text evidence="1">Presumably involved in the processing and regular turnover of intracellular proteins. Catalyzes the removal of unsubstituted N-terminal amino acids from various peptides.</text>
</comment>
<comment type="catalytic activity">
    <reaction evidence="1">
        <text>Release of an N-terminal amino acid, Xaa-|-Yaa-, in which Xaa is preferably Leu, but may be other amino acids including Pro although not Arg or Lys, and Yaa may be Pro. Amino acid amides and methyl esters are also readily hydrolyzed, but rates on arylamides are exceedingly low.</text>
        <dbReference type="EC" id="3.4.11.1"/>
    </reaction>
</comment>
<comment type="catalytic activity">
    <reaction evidence="1">
        <text>Release of an N-terminal amino acid, preferentially leucine, but not glutamic or aspartic acids.</text>
        <dbReference type="EC" id="3.4.11.10"/>
    </reaction>
</comment>
<comment type="cofactor">
    <cofactor evidence="1">
        <name>Mn(2+)</name>
        <dbReference type="ChEBI" id="CHEBI:29035"/>
    </cofactor>
    <text evidence="1">Binds 2 manganese ions per subunit.</text>
</comment>
<comment type="subcellular location">
    <subcellularLocation>
        <location evidence="1">Cytoplasm</location>
    </subcellularLocation>
</comment>
<comment type="similarity">
    <text evidence="1">Belongs to the peptidase M17 family.</text>
</comment>
<organism>
    <name type="scientific">Alkaliphilus metalliredigens (strain QYMF)</name>
    <dbReference type="NCBI Taxonomy" id="293826"/>
    <lineage>
        <taxon>Bacteria</taxon>
        <taxon>Bacillati</taxon>
        <taxon>Bacillota</taxon>
        <taxon>Clostridia</taxon>
        <taxon>Peptostreptococcales</taxon>
        <taxon>Natronincolaceae</taxon>
        <taxon>Alkaliphilus</taxon>
    </lineage>
</organism>
<feature type="chain" id="PRO_1000058383" description="Probable cytosol aminopeptidase">
    <location>
        <begin position="1"/>
        <end position="500"/>
    </location>
</feature>
<feature type="active site" evidence="1">
    <location>
        <position position="280"/>
    </location>
</feature>
<feature type="active site" evidence="1">
    <location>
        <position position="354"/>
    </location>
</feature>
<feature type="binding site" evidence="1">
    <location>
        <position position="268"/>
    </location>
    <ligand>
        <name>Mn(2+)</name>
        <dbReference type="ChEBI" id="CHEBI:29035"/>
        <label>2</label>
    </ligand>
</feature>
<feature type="binding site" evidence="1">
    <location>
        <position position="273"/>
    </location>
    <ligand>
        <name>Mn(2+)</name>
        <dbReference type="ChEBI" id="CHEBI:29035"/>
        <label>1</label>
    </ligand>
</feature>
<feature type="binding site" evidence="1">
    <location>
        <position position="273"/>
    </location>
    <ligand>
        <name>Mn(2+)</name>
        <dbReference type="ChEBI" id="CHEBI:29035"/>
        <label>2</label>
    </ligand>
</feature>
<feature type="binding site" evidence="1">
    <location>
        <position position="291"/>
    </location>
    <ligand>
        <name>Mn(2+)</name>
        <dbReference type="ChEBI" id="CHEBI:29035"/>
        <label>2</label>
    </ligand>
</feature>
<feature type="binding site" evidence="1">
    <location>
        <position position="350"/>
    </location>
    <ligand>
        <name>Mn(2+)</name>
        <dbReference type="ChEBI" id="CHEBI:29035"/>
        <label>1</label>
    </ligand>
</feature>
<feature type="binding site" evidence="1">
    <location>
        <position position="352"/>
    </location>
    <ligand>
        <name>Mn(2+)</name>
        <dbReference type="ChEBI" id="CHEBI:29035"/>
        <label>1</label>
    </ligand>
</feature>
<feature type="binding site" evidence="1">
    <location>
        <position position="352"/>
    </location>
    <ligand>
        <name>Mn(2+)</name>
        <dbReference type="ChEBI" id="CHEBI:29035"/>
        <label>2</label>
    </ligand>
</feature>
<protein>
    <recommendedName>
        <fullName evidence="1">Probable cytosol aminopeptidase</fullName>
        <ecNumber evidence="1">3.4.11.1</ecNumber>
    </recommendedName>
    <alternativeName>
        <fullName evidence="1">Leucine aminopeptidase</fullName>
        <shortName evidence="1">LAP</shortName>
        <ecNumber evidence="1">3.4.11.10</ecNumber>
    </alternativeName>
    <alternativeName>
        <fullName evidence="1">Leucyl aminopeptidase</fullName>
    </alternativeName>
</protein>
<sequence>MKFKVINEKISNLMVDILIIGIYEEVKSLGDVHHTMDQQLGGLIQEMINAEEFKGEEGETLLVHTLGRVPAKKCILLGLGKAEAFKENNLRNVVAKVMREARKSRAETIAITPFGICNHISAEKVGQAIAEGTKLGLYQFNHYKTTAKEQEERVLQEVYILNEETGITAQLQTGIDTGEKLAHATMIARDLVNEPGNVLTPTEMAKRAQSISQKHGLELEILEKEDMERLGMGCFLGVTAGSEEPPKLMVLKYNGGEEGGEILGLVGKGLTFDSGGISIKPGEGMDAMKGDMGGAAAVLGAMEAIGALKPKTNVIAVVGACENMPSGKAYKPGDILTSKGGKTVEILNTDAEGRLVLVDCVSYALQLGATRLVDLATLTGACLIALGTTTTALISNDELWVKQIEDASKNAGEQVWQLPSFPEYKEMIKSEIADLKNIGGKYAGAITAGLFVGEFAEGKPWVHMDIAGTSMSDKEKGYITKGGTGVAVRTLYELAKSMEK</sequence>
<dbReference type="EC" id="3.4.11.1" evidence="1"/>
<dbReference type="EC" id="3.4.11.10" evidence="1"/>
<dbReference type="EMBL" id="CP000724">
    <property type="protein sequence ID" value="ABR50687.1"/>
    <property type="molecule type" value="Genomic_DNA"/>
</dbReference>
<dbReference type="RefSeq" id="WP_012065575.1">
    <property type="nucleotide sequence ID" value="NC_009633.1"/>
</dbReference>
<dbReference type="SMR" id="A6TWW9"/>
<dbReference type="STRING" id="293826.Amet_4616"/>
<dbReference type="MEROPS" id="M17.010"/>
<dbReference type="KEGG" id="amt:Amet_4616"/>
<dbReference type="eggNOG" id="COG0260">
    <property type="taxonomic scope" value="Bacteria"/>
</dbReference>
<dbReference type="HOGENOM" id="CLU_013734_2_2_9"/>
<dbReference type="OrthoDB" id="9809354at2"/>
<dbReference type="Proteomes" id="UP000001572">
    <property type="component" value="Chromosome"/>
</dbReference>
<dbReference type="GO" id="GO:0005737">
    <property type="term" value="C:cytoplasm"/>
    <property type="evidence" value="ECO:0007669"/>
    <property type="project" value="UniProtKB-SubCell"/>
</dbReference>
<dbReference type="GO" id="GO:0030145">
    <property type="term" value="F:manganese ion binding"/>
    <property type="evidence" value="ECO:0007669"/>
    <property type="project" value="UniProtKB-UniRule"/>
</dbReference>
<dbReference type="GO" id="GO:0070006">
    <property type="term" value="F:metalloaminopeptidase activity"/>
    <property type="evidence" value="ECO:0007669"/>
    <property type="project" value="InterPro"/>
</dbReference>
<dbReference type="GO" id="GO:0006508">
    <property type="term" value="P:proteolysis"/>
    <property type="evidence" value="ECO:0007669"/>
    <property type="project" value="UniProtKB-KW"/>
</dbReference>
<dbReference type="CDD" id="cd00433">
    <property type="entry name" value="Peptidase_M17"/>
    <property type="match status" value="1"/>
</dbReference>
<dbReference type="Gene3D" id="3.40.220.10">
    <property type="entry name" value="Leucine Aminopeptidase, subunit E, domain 1"/>
    <property type="match status" value="1"/>
</dbReference>
<dbReference type="Gene3D" id="3.40.630.10">
    <property type="entry name" value="Zn peptidases"/>
    <property type="match status" value="1"/>
</dbReference>
<dbReference type="HAMAP" id="MF_00181">
    <property type="entry name" value="Cytosol_peptidase_M17"/>
    <property type="match status" value="1"/>
</dbReference>
<dbReference type="InterPro" id="IPR011356">
    <property type="entry name" value="Leucine_aapep/pepB"/>
</dbReference>
<dbReference type="InterPro" id="IPR043472">
    <property type="entry name" value="Macro_dom-like"/>
</dbReference>
<dbReference type="InterPro" id="IPR000819">
    <property type="entry name" value="Peptidase_M17_C"/>
</dbReference>
<dbReference type="InterPro" id="IPR023042">
    <property type="entry name" value="Peptidase_M17_leu_NH2_pept"/>
</dbReference>
<dbReference type="InterPro" id="IPR008283">
    <property type="entry name" value="Peptidase_M17_N"/>
</dbReference>
<dbReference type="NCBIfam" id="NF002073">
    <property type="entry name" value="PRK00913.1-2"/>
    <property type="match status" value="1"/>
</dbReference>
<dbReference type="NCBIfam" id="NF002074">
    <property type="entry name" value="PRK00913.1-4"/>
    <property type="match status" value="1"/>
</dbReference>
<dbReference type="NCBIfam" id="NF002077">
    <property type="entry name" value="PRK00913.2-4"/>
    <property type="match status" value="1"/>
</dbReference>
<dbReference type="NCBIfam" id="NF002083">
    <property type="entry name" value="PRK00913.3-5"/>
    <property type="match status" value="1"/>
</dbReference>
<dbReference type="PANTHER" id="PTHR11963:SF23">
    <property type="entry name" value="CYTOSOL AMINOPEPTIDASE"/>
    <property type="match status" value="1"/>
</dbReference>
<dbReference type="PANTHER" id="PTHR11963">
    <property type="entry name" value="LEUCINE AMINOPEPTIDASE-RELATED"/>
    <property type="match status" value="1"/>
</dbReference>
<dbReference type="Pfam" id="PF00883">
    <property type="entry name" value="Peptidase_M17"/>
    <property type="match status" value="1"/>
</dbReference>
<dbReference type="Pfam" id="PF02789">
    <property type="entry name" value="Peptidase_M17_N"/>
    <property type="match status" value="1"/>
</dbReference>
<dbReference type="PRINTS" id="PR00481">
    <property type="entry name" value="LAMNOPPTDASE"/>
</dbReference>
<dbReference type="SUPFAM" id="SSF52949">
    <property type="entry name" value="Macro domain-like"/>
    <property type="match status" value="1"/>
</dbReference>
<dbReference type="SUPFAM" id="SSF53187">
    <property type="entry name" value="Zn-dependent exopeptidases"/>
    <property type="match status" value="1"/>
</dbReference>
<dbReference type="PROSITE" id="PS00631">
    <property type="entry name" value="CYTOSOL_AP"/>
    <property type="match status" value="1"/>
</dbReference>
<evidence type="ECO:0000255" key="1">
    <source>
        <dbReference type="HAMAP-Rule" id="MF_00181"/>
    </source>
</evidence>